<organism>
    <name type="scientific">Histophilus somni (strain 2336)</name>
    <name type="common">Haemophilus somnus</name>
    <dbReference type="NCBI Taxonomy" id="228400"/>
    <lineage>
        <taxon>Bacteria</taxon>
        <taxon>Pseudomonadati</taxon>
        <taxon>Pseudomonadota</taxon>
        <taxon>Gammaproteobacteria</taxon>
        <taxon>Pasteurellales</taxon>
        <taxon>Pasteurellaceae</taxon>
        <taxon>Histophilus</taxon>
    </lineage>
</organism>
<sequence>MITIKKGLDLPIAGKPEQVIHNGNAVKEVALLGEEYVGMRPSMKVREGDVVKKGQVLFEDKKNPGIVFTAPASGTVTAINRGAKRVLQSVVIKVEGNEQITFTQYNEDELKKLTSEQVRQNLQSSGLWTALRTRPFSKVPASDAVPSSIFVNAMDTNPLSANPEIVLKEHWQDFTDGLTVLSRLHEGKLHLCKAGDSNIPTIDLPNLAVHDFSGPHPAGLSGTHIHFIDPVSATKSVWYLNYQDVIAIGKLFTTGEIYTDRVVSLAGPQVKNPRLIRTQLGANLSHLTENELSAGENRVISGSVLSGNTAIGPYNYLGRYALQVSVIAEGREKEFLGWIMPGKNKFSITRTVLGHFSSKLFNFTSAVNGGHRAMVPIGAYERVVPLDIIPTLLLRDLASGDTDSAQALGCLELDEEDLALCTFVCPGKNEYGPMLRAALDKIEKEG</sequence>
<proteinExistence type="inferred from homology"/>
<comment type="function">
    <text evidence="1">NQR complex catalyzes the reduction of ubiquinone-1 to ubiquinol by two successive reactions, coupled with the transport of Na(+) ions from the cytoplasm to the periplasm. NqrA to NqrE are probably involved in the second step, the conversion of ubisemiquinone to ubiquinol.</text>
</comment>
<comment type="catalytic activity">
    <reaction evidence="1">
        <text>a ubiquinone + n Na(+)(in) + NADH + H(+) = a ubiquinol + n Na(+)(out) + NAD(+)</text>
        <dbReference type="Rhea" id="RHEA:47748"/>
        <dbReference type="Rhea" id="RHEA-COMP:9565"/>
        <dbReference type="Rhea" id="RHEA-COMP:9566"/>
        <dbReference type="ChEBI" id="CHEBI:15378"/>
        <dbReference type="ChEBI" id="CHEBI:16389"/>
        <dbReference type="ChEBI" id="CHEBI:17976"/>
        <dbReference type="ChEBI" id="CHEBI:29101"/>
        <dbReference type="ChEBI" id="CHEBI:57540"/>
        <dbReference type="ChEBI" id="CHEBI:57945"/>
        <dbReference type="EC" id="7.2.1.1"/>
    </reaction>
</comment>
<comment type="subunit">
    <text evidence="1">Composed of six subunits; NqrA, NqrB, NqrC, NqrD, NqrE and NqrF.</text>
</comment>
<comment type="similarity">
    <text evidence="1">Belongs to the NqrA family.</text>
</comment>
<gene>
    <name evidence="1" type="primary">nqrA</name>
    <name type="ordered locus">HSM_1847</name>
</gene>
<protein>
    <recommendedName>
        <fullName evidence="1">Na(+)-translocating NADH-quinone reductase subunit A</fullName>
        <shortName evidence="1">Na(+)-NQR subunit A</shortName>
        <shortName evidence="1">Na(+)-translocating NQR subunit A</shortName>
        <ecNumber evidence="1">7.2.1.1</ecNumber>
    </recommendedName>
    <alternativeName>
        <fullName evidence="1">NQR complex subunit A</fullName>
    </alternativeName>
    <alternativeName>
        <fullName evidence="1">NQR-1 subunit A</fullName>
    </alternativeName>
</protein>
<reference key="1">
    <citation type="submission" date="2008-02" db="EMBL/GenBank/DDBJ databases">
        <title>Complete sequence of Haemophilus somnus 2336.</title>
        <authorList>
            <consortium name="US DOE Joint Genome Institute"/>
            <person name="Siddaramappa S."/>
            <person name="Duncan A.J."/>
            <person name="Challacombe J.F."/>
            <person name="Rainey D."/>
            <person name="Gillaspy A.F."/>
            <person name="Carson M."/>
            <person name="Gipson J."/>
            <person name="Gipson M."/>
            <person name="Bruce D."/>
            <person name="Detter J.C."/>
            <person name="Han C.S."/>
            <person name="Land M."/>
            <person name="Tapia R."/>
            <person name="Thompson L.S."/>
            <person name="Orvis J."/>
            <person name="Zaitshik J."/>
            <person name="Barnes G."/>
            <person name="Brettin T.S."/>
            <person name="Dyer D.W."/>
            <person name="Inzana T.J."/>
        </authorList>
    </citation>
    <scope>NUCLEOTIDE SEQUENCE [LARGE SCALE GENOMIC DNA]</scope>
    <source>
        <strain>2336</strain>
    </source>
</reference>
<dbReference type="EC" id="7.2.1.1" evidence="1"/>
<dbReference type="EMBL" id="CP000947">
    <property type="protein sequence ID" value="ACA31635.1"/>
    <property type="molecule type" value="Genomic_DNA"/>
</dbReference>
<dbReference type="RefSeq" id="WP_012340938.1">
    <property type="nucleotide sequence ID" value="NC_010519.1"/>
</dbReference>
<dbReference type="SMR" id="B0UWG2"/>
<dbReference type="STRING" id="228400.HSM_1847"/>
<dbReference type="GeneID" id="31488154"/>
<dbReference type="KEGG" id="hsm:HSM_1847"/>
<dbReference type="HOGENOM" id="CLU_046656_0_0_6"/>
<dbReference type="GO" id="GO:0016655">
    <property type="term" value="F:oxidoreductase activity, acting on NAD(P)H, quinone or similar compound as acceptor"/>
    <property type="evidence" value="ECO:0007669"/>
    <property type="project" value="UniProtKB-UniRule"/>
</dbReference>
<dbReference type="GO" id="GO:0006814">
    <property type="term" value="P:sodium ion transport"/>
    <property type="evidence" value="ECO:0007669"/>
    <property type="project" value="UniProtKB-UniRule"/>
</dbReference>
<dbReference type="Gene3D" id="2.40.50.100">
    <property type="match status" value="1"/>
</dbReference>
<dbReference type="HAMAP" id="MF_00425">
    <property type="entry name" value="NqrA"/>
    <property type="match status" value="1"/>
</dbReference>
<dbReference type="InterPro" id="IPR008703">
    <property type="entry name" value="NqrA"/>
</dbReference>
<dbReference type="InterPro" id="IPR056148">
    <property type="entry name" value="NQRA_2nd"/>
</dbReference>
<dbReference type="InterPro" id="IPR022615">
    <property type="entry name" value="NqrA_C_domain"/>
</dbReference>
<dbReference type="InterPro" id="IPR056147">
    <property type="entry name" value="NQRA_N"/>
</dbReference>
<dbReference type="NCBIfam" id="TIGR01936">
    <property type="entry name" value="nqrA"/>
    <property type="match status" value="1"/>
</dbReference>
<dbReference type="NCBIfam" id="NF003759">
    <property type="entry name" value="PRK05352.1-2"/>
    <property type="match status" value="1"/>
</dbReference>
<dbReference type="PANTHER" id="PTHR37839">
    <property type="entry name" value="NA(+)-TRANSLOCATING NADH-QUINONE REDUCTASE SUBUNIT A"/>
    <property type="match status" value="1"/>
</dbReference>
<dbReference type="PANTHER" id="PTHR37839:SF1">
    <property type="entry name" value="NA(+)-TRANSLOCATING NADH-QUINONE REDUCTASE SUBUNIT A"/>
    <property type="match status" value="1"/>
</dbReference>
<dbReference type="Pfam" id="PF24836">
    <property type="entry name" value="NQRA_2nd"/>
    <property type="match status" value="1"/>
</dbReference>
<dbReference type="Pfam" id="PF05896">
    <property type="entry name" value="NQRA_N"/>
    <property type="match status" value="1"/>
</dbReference>
<dbReference type="Pfam" id="PF11973">
    <property type="entry name" value="NQRA_SLBB"/>
    <property type="match status" value="1"/>
</dbReference>
<name>NQRA_HISS2</name>
<accession>B0UWG2</accession>
<evidence type="ECO:0000255" key="1">
    <source>
        <dbReference type="HAMAP-Rule" id="MF_00425"/>
    </source>
</evidence>
<feature type="chain" id="PRO_1000080564" description="Na(+)-translocating NADH-quinone reductase subunit A">
    <location>
        <begin position="1"/>
        <end position="446"/>
    </location>
</feature>
<keyword id="KW-0406">Ion transport</keyword>
<keyword id="KW-0520">NAD</keyword>
<keyword id="KW-0915">Sodium</keyword>
<keyword id="KW-0739">Sodium transport</keyword>
<keyword id="KW-1278">Translocase</keyword>
<keyword id="KW-0813">Transport</keyword>
<keyword id="KW-0830">Ubiquinone</keyword>